<accession>A0RHE1</accession>
<gene>
    <name evidence="1" type="primary">mutS</name>
    <name type="ordered locus">BALH_3397</name>
</gene>
<comment type="function">
    <text evidence="1">This protein is involved in the repair of mismatches in DNA. It is possible that it carries out the mismatch recognition step. This protein has a weak ATPase activity.</text>
</comment>
<comment type="similarity">
    <text evidence="1">Belongs to the DNA mismatch repair MutS family.</text>
</comment>
<protein>
    <recommendedName>
        <fullName evidence="1">DNA mismatch repair protein MutS</fullName>
    </recommendedName>
</protein>
<evidence type="ECO:0000255" key="1">
    <source>
        <dbReference type="HAMAP-Rule" id="MF_00096"/>
    </source>
</evidence>
<proteinExistence type="inferred from homology"/>
<dbReference type="EMBL" id="CP000485">
    <property type="protein sequence ID" value="ABK86634.1"/>
    <property type="molecule type" value="Genomic_DNA"/>
</dbReference>
<dbReference type="RefSeq" id="WP_000196010.1">
    <property type="nucleotide sequence ID" value="NC_008600.1"/>
</dbReference>
<dbReference type="SMR" id="A0RHE1"/>
<dbReference type="KEGG" id="btl:BALH_3397"/>
<dbReference type="HOGENOM" id="CLU_002472_3_1_9"/>
<dbReference type="GO" id="GO:0005829">
    <property type="term" value="C:cytosol"/>
    <property type="evidence" value="ECO:0007669"/>
    <property type="project" value="TreeGrafter"/>
</dbReference>
<dbReference type="GO" id="GO:0005524">
    <property type="term" value="F:ATP binding"/>
    <property type="evidence" value="ECO:0007669"/>
    <property type="project" value="UniProtKB-UniRule"/>
</dbReference>
<dbReference type="GO" id="GO:0140664">
    <property type="term" value="F:ATP-dependent DNA damage sensor activity"/>
    <property type="evidence" value="ECO:0007669"/>
    <property type="project" value="InterPro"/>
</dbReference>
<dbReference type="GO" id="GO:0003684">
    <property type="term" value="F:damaged DNA binding"/>
    <property type="evidence" value="ECO:0007669"/>
    <property type="project" value="UniProtKB-UniRule"/>
</dbReference>
<dbReference type="GO" id="GO:0030983">
    <property type="term" value="F:mismatched DNA binding"/>
    <property type="evidence" value="ECO:0007669"/>
    <property type="project" value="InterPro"/>
</dbReference>
<dbReference type="GO" id="GO:0006298">
    <property type="term" value="P:mismatch repair"/>
    <property type="evidence" value="ECO:0007669"/>
    <property type="project" value="UniProtKB-UniRule"/>
</dbReference>
<dbReference type="CDD" id="cd03284">
    <property type="entry name" value="ABC_MutS1"/>
    <property type="match status" value="1"/>
</dbReference>
<dbReference type="FunFam" id="1.10.1420.10:FF:000007">
    <property type="entry name" value="DNA mismatch repair protein MutS"/>
    <property type="match status" value="1"/>
</dbReference>
<dbReference type="FunFam" id="3.30.420.110:FF:000007">
    <property type="entry name" value="DNA mismatch repair protein MutS"/>
    <property type="match status" value="1"/>
</dbReference>
<dbReference type="FunFam" id="3.40.1170.10:FF:000001">
    <property type="entry name" value="DNA mismatch repair protein MutS"/>
    <property type="match status" value="1"/>
</dbReference>
<dbReference type="FunFam" id="3.40.50.300:FF:000896">
    <property type="entry name" value="DNA mismatch repair protein MutS"/>
    <property type="match status" value="1"/>
</dbReference>
<dbReference type="Gene3D" id="1.10.1420.10">
    <property type="match status" value="2"/>
</dbReference>
<dbReference type="Gene3D" id="3.40.1170.10">
    <property type="entry name" value="DNA repair protein MutS, domain I"/>
    <property type="match status" value="1"/>
</dbReference>
<dbReference type="Gene3D" id="3.30.420.110">
    <property type="entry name" value="MutS, connector domain"/>
    <property type="match status" value="1"/>
</dbReference>
<dbReference type="Gene3D" id="3.40.50.300">
    <property type="entry name" value="P-loop containing nucleotide triphosphate hydrolases"/>
    <property type="match status" value="1"/>
</dbReference>
<dbReference type="HAMAP" id="MF_00096">
    <property type="entry name" value="MutS"/>
    <property type="match status" value="1"/>
</dbReference>
<dbReference type="InterPro" id="IPR005748">
    <property type="entry name" value="DNA_mismatch_repair_MutS"/>
</dbReference>
<dbReference type="InterPro" id="IPR007695">
    <property type="entry name" value="DNA_mismatch_repair_MutS-lik_N"/>
</dbReference>
<dbReference type="InterPro" id="IPR017261">
    <property type="entry name" value="DNA_mismatch_repair_MutS/MSH"/>
</dbReference>
<dbReference type="InterPro" id="IPR000432">
    <property type="entry name" value="DNA_mismatch_repair_MutS_C"/>
</dbReference>
<dbReference type="InterPro" id="IPR007861">
    <property type="entry name" value="DNA_mismatch_repair_MutS_clamp"/>
</dbReference>
<dbReference type="InterPro" id="IPR007696">
    <property type="entry name" value="DNA_mismatch_repair_MutS_core"/>
</dbReference>
<dbReference type="InterPro" id="IPR016151">
    <property type="entry name" value="DNA_mismatch_repair_MutS_N"/>
</dbReference>
<dbReference type="InterPro" id="IPR036187">
    <property type="entry name" value="DNA_mismatch_repair_MutS_sf"/>
</dbReference>
<dbReference type="InterPro" id="IPR007860">
    <property type="entry name" value="DNA_mmatch_repair_MutS_con_dom"/>
</dbReference>
<dbReference type="InterPro" id="IPR045076">
    <property type="entry name" value="MutS"/>
</dbReference>
<dbReference type="InterPro" id="IPR036678">
    <property type="entry name" value="MutS_con_dom_sf"/>
</dbReference>
<dbReference type="InterPro" id="IPR027417">
    <property type="entry name" value="P-loop_NTPase"/>
</dbReference>
<dbReference type="NCBIfam" id="TIGR01070">
    <property type="entry name" value="mutS1"/>
    <property type="match status" value="1"/>
</dbReference>
<dbReference type="NCBIfam" id="NF003810">
    <property type="entry name" value="PRK05399.1"/>
    <property type="match status" value="1"/>
</dbReference>
<dbReference type="PANTHER" id="PTHR11361:SF34">
    <property type="entry name" value="DNA MISMATCH REPAIR PROTEIN MSH1, MITOCHONDRIAL"/>
    <property type="match status" value="1"/>
</dbReference>
<dbReference type="PANTHER" id="PTHR11361">
    <property type="entry name" value="DNA MISMATCH REPAIR PROTEIN MUTS FAMILY MEMBER"/>
    <property type="match status" value="1"/>
</dbReference>
<dbReference type="Pfam" id="PF01624">
    <property type="entry name" value="MutS_I"/>
    <property type="match status" value="1"/>
</dbReference>
<dbReference type="Pfam" id="PF05188">
    <property type="entry name" value="MutS_II"/>
    <property type="match status" value="1"/>
</dbReference>
<dbReference type="Pfam" id="PF05192">
    <property type="entry name" value="MutS_III"/>
    <property type="match status" value="1"/>
</dbReference>
<dbReference type="Pfam" id="PF05190">
    <property type="entry name" value="MutS_IV"/>
    <property type="match status" value="1"/>
</dbReference>
<dbReference type="Pfam" id="PF00488">
    <property type="entry name" value="MutS_V"/>
    <property type="match status" value="1"/>
</dbReference>
<dbReference type="PIRSF" id="PIRSF037677">
    <property type="entry name" value="DNA_mis_repair_Msh6"/>
    <property type="match status" value="1"/>
</dbReference>
<dbReference type="SMART" id="SM00534">
    <property type="entry name" value="MUTSac"/>
    <property type="match status" value="1"/>
</dbReference>
<dbReference type="SMART" id="SM00533">
    <property type="entry name" value="MUTSd"/>
    <property type="match status" value="1"/>
</dbReference>
<dbReference type="SUPFAM" id="SSF55271">
    <property type="entry name" value="DNA repair protein MutS, domain I"/>
    <property type="match status" value="1"/>
</dbReference>
<dbReference type="SUPFAM" id="SSF53150">
    <property type="entry name" value="DNA repair protein MutS, domain II"/>
    <property type="match status" value="1"/>
</dbReference>
<dbReference type="SUPFAM" id="SSF48334">
    <property type="entry name" value="DNA repair protein MutS, domain III"/>
    <property type="match status" value="1"/>
</dbReference>
<dbReference type="SUPFAM" id="SSF52540">
    <property type="entry name" value="P-loop containing nucleoside triphosphate hydrolases"/>
    <property type="match status" value="1"/>
</dbReference>
<dbReference type="PROSITE" id="PS00486">
    <property type="entry name" value="DNA_MISMATCH_REPAIR_2"/>
    <property type="match status" value="1"/>
</dbReference>
<organism>
    <name type="scientific">Bacillus thuringiensis (strain Al Hakam)</name>
    <dbReference type="NCBI Taxonomy" id="412694"/>
    <lineage>
        <taxon>Bacteria</taxon>
        <taxon>Bacillati</taxon>
        <taxon>Bacillota</taxon>
        <taxon>Bacilli</taxon>
        <taxon>Bacillales</taxon>
        <taxon>Bacillaceae</taxon>
        <taxon>Bacillus</taxon>
        <taxon>Bacillus cereus group</taxon>
    </lineage>
</organism>
<sequence length="890" mass="100841">MTQYTPMIQQYLKVKADYQDAFLFFRLGDFYEMFFEDAVKAAHELEITLTSRDGGSSERIPMCGVPYHAAKNYIEQLVEKGYKVAVCEQVEDPKTAKGVVRREVVQLITPGTMMEGRTIDEKENNFLAALTHFEDGSYALACNDLTTGQNTVTLLTGSVEDILLEVYATGSKEIVVDSSFSKDELNKLTETLKMTISYEDATAIPEGLEHLVKNVSQAKLIKAVGRLFNYVIRTQKRSLDHLQPVEIYYTNQFMKIDVHSKRNLELTETLRTKEKTGSLLWLLDKTKTAMGGRMLKQWMERPLIQKERIEERLEMVETFVNDYFLREDLKEKLKEVYDLERLAGKVAFGNVNARDLLQLRRSLLQVPAILEAISLLDNAYAARLIQGADPCESLTELLGRSIQENPPLSIKDGDIIKDGYNDKLDQYRYVSKNGKTWIAELEKRERDITGIKSLKIGYNRIFGYYIEVTKANLGALPEGRYERKQTLANAERFITDELKEKETLILEAEEKIVQLEYDLFTALREEVKVFIPKLQHLAKVISELDVLQSFATVSEEEQFVKPVLTTKREIFIKDGRHPVVEKVLNGKLYVPNDCIMPENMDVFLITGPNMSGKSTYMRQLALVTVMSQIGCFVPATEAVLPVFDQIFTRIGAADDLISGQSTFMVEMLEAKNAIANASERSLILFDEIGRGTSTYDGMALAQAIIEHIHDQIGAKTLFSTHYHELTVLEDSLDQLKNVHVSAIEENGKVVFLHKIQDGAADKSYGIHVAQLAELPDSLIARAKEVLAQLEGQEEIVIPKRVEVKEQEVIPEPVVVKEEPVAIEETKVDNEEESQLSFFGAEQSSKKQDKPVLDAKETAVLTQIKKIDLLDMTPLEAMNELYRLQKKLKKG</sequence>
<reference key="1">
    <citation type="journal article" date="2007" name="J. Bacteriol.">
        <title>The complete genome sequence of Bacillus thuringiensis Al Hakam.</title>
        <authorList>
            <person name="Challacombe J.F."/>
            <person name="Altherr M.R."/>
            <person name="Xie G."/>
            <person name="Bhotika S.S."/>
            <person name="Brown N."/>
            <person name="Bruce D."/>
            <person name="Campbell C.S."/>
            <person name="Campbell M.L."/>
            <person name="Chen J."/>
            <person name="Chertkov O."/>
            <person name="Cleland C."/>
            <person name="Dimitrijevic M."/>
            <person name="Doggett N.A."/>
            <person name="Fawcett J.J."/>
            <person name="Glavina T."/>
            <person name="Goodwin L.A."/>
            <person name="Green L.D."/>
            <person name="Han C.S."/>
            <person name="Hill K.K."/>
            <person name="Hitchcock P."/>
            <person name="Jackson P.J."/>
            <person name="Keim P."/>
            <person name="Kewalramani A.R."/>
            <person name="Longmire J."/>
            <person name="Lucas S."/>
            <person name="Malfatti S."/>
            <person name="Martinez D."/>
            <person name="McMurry K."/>
            <person name="Meincke L.J."/>
            <person name="Misra M."/>
            <person name="Moseman B.L."/>
            <person name="Mundt M."/>
            <person name="Munk A.C."/>
            <person name="Okinaka R.T."/>
            <person name="Parson-Quintana B."/>
            <person name="Reilly L.P."/>
            <person name="Richardson P."/>
            <person name="Robinson D.L."/>
            <person name="Saunders E."/>
            <person name="Tapia R."/>
            <person name="Tesmer J.G."/>
            <person name="Thayer N."/>
            <person name="Thompson L.S."/>
            <person name="Tice H."/>
            <person name="Ticknor L.O."/>
            <person name="Wills P.L."/>
            <person name="Gilna P."/>
            <person name="Brettin T.S."/>
        </authorList>
    </citation>
    <scope>NUCLEOTIDE SEQUENCE [LARGE SCALE GENOMIC DNA]</scope>
    <source>
        <strain>Al Hakam</strain>
    </source>
</reference>
<name>MUTS_BACAH</name>
<feature type="chain" id="PRO_1000008045" description="DNA mismatch repair protein MutS">
    <location>
        <begin position="1"/>
        <end position="890"/>
    </location>
</feature>
<feature type="binding site" evidence="1">
    <location>
        <begin position="607"/>
        <end position="614"/>
    </location>
    <ligand>
        <name>ATP</name>
        <dbReference type="ChEBI" id="CHEBI:30616"/>
    </ligand>
</feature>
<keyword id="KW-0067">ATP-binding</keyword>
<keyword id="KW-0227">DNA damage</keyword>
<keyword id="KW-0234">DNA repair</keyword>
<keyword id="KW-0238">DNA-binding</keyword>
<keyword id="KW-0547">Nucleotide-binding</keyword>